<evidence type="ECO:0000250" key="1"/>
<evidence type="ECO:0000255" key="2"/>
<evidence type="ECO:0000255" key="3">
    <source>
        <dbReference type="PROSITE-ProRule" id="PRU00143"/>
    </source>
</evidence>
<evidence type="ECO:0000255" key="4">
    <source>
        <dbReference type="PROSITE-ProRule" id="PRU10095"/>
    </source>
</evidence>
<evidence type="ECO:0000305" key="5"/>
<organism>
    <name type="scientific">Brucella suis biovar 1 (strain 1330)</name>
    <dbReference type="NCBI Taxonomy" id="204722"/>
    <lineage>
        <taxon>Bacteria</taxon>
        <taxon>Pseudomonadati</taxon>
        <taxon>Pseudomonadota</taxon>
        <taxon>Alphaproteobacteria</taxon>
        <taxon>Hyphomicrobiales</taxon>
        <taxon>Brucellaceae</taxon>
        <taxon>Brucella/Ochrobactrum group</taxon>
        <taxon>Brucella</taxon>
    </lineage>
</organism>
<sequence>MQEALALFFGSESLLVGTIIPFLFVLTVVVFVHEMGHYLVARWCGIGAQAFSIGFGPELLGFTDRHGTRWKLSAIPLGGYVKFIGDESETSSPVGVNESALSEEDRKRAFHTQPVWKRAATVFAGPAFNIILTIAIFSVFFALYGRQIADPLIAGVQPGSPAAEAGFEPGDRFVSVEGEKITTFADVQRIVSGRAGDKLNFTVERDGKMVDLQAVPKIVERTDPLGNKVKLGAIGVETTEAVGNFRRIEYGPLESVGQAVIETGHIIGRTGEFFKRFAVGREDKCQLGGPVKIATMASKAASQGFDWLIQLMAMLSIGIGLLNLFPLPPLDGGHLVFYAVEAIKGSPVSGAAQEIFYRIGFLLVMGFMGFVLFNDLFAC</sequence>
<reference key="1">
    <citation type="journal article" date="2002" name="Proc. Natl. Acad. Sci. U.S.A.">
        <title>The Brucella suis genome reveals fundamental similarities between animal and plant pathogens and symbionts.</title>
        <authorList>
            <person name="Paulsen I.T."/>
            <person name="Seshadri R."/>
            <person name="Nelson K.E."/>
            <person name="Eisen J.A."/>
            <person name="Heidelberg J.F."/>
            <person name="Read T.D."/>
            <person name="Dodson R.J."/>
            <person name="Umayam L.A."/>
            <person name="Brinkac L.M."/>
            <person name="Beanan M.J."/>
            <person name="Daugherty S.C."/>
            <person name="DeBoy R.T."/>
            <person name="Durkin A.S."/>
            <person name="Kolonay J.F."/>
            <person name="Madupu R."/>
            <person name="Nelson W.C."/>
            <person name="Ayodeji B."/>
            <person name="Kraul M."/>
            <person name="Shetty J."/>
            <person name="Malek J.A."/>
            <person name="Van Aken S.E."/>
            <person name="Riedmuller S."/>
            <person name="Tettelin H."/>
            <person name="Gill S.R."/>
            <person name="White O."/>
            <person name="Salzberg S.L."/>
            <person name="Hoover D.L."/>
            <person name="Lindler L.E."/>
            <person name="Halling S.M."/>
            <person name="Boyle S.M."/>
            <person name="Fraser C.M."/>
        </authorList>
    </citation>
    <scope>NUCLEOTIDE SEQUENCE [LARGE SCALE GENOMIC DNA]</scope>
    <source>
        <strain>1330</strain>
    </source>
</reference>
<reference key="2">
    <citation type="journal article" date="2011" name="J. Bacteriol.">
        <title>Revised genome sequence of Brucella suis 1330.</title>
        <authorList>
            <person name="Tae H."/>
            <person name="Shallom S."/>
            <person name="Settlage R."/>
            <person name="Preston D."/>
            <person name="Adams L.G."/>
            <person name="Garner H.R."/>
        </authorList>
    </citation>
    <scope>NUCLEOTIDE SEQUENCE [LARGE SCALE GENOMIC DNA]</scope>
    <source>
        <strain>1330</strain>
    </source>
</reference>
<dbReference type="EC" id="3.4.24.-"/>
<dbReference type="EMBL" id="AE014291">
    <property type="protein sequence ID" value="AAN30076.1"/>
    <property type="molecule type" value="Genomic_DNA"/>
</dbReference>
<dbReference type="EMBL" id="CP002997">
    <property type="protein sequence ID" value="AEM18494.1"/>
    <property type="molecule type" value="Genomic_DNA"/>
</dbReference>
<dbReference type="SMR" id="Q8G0E1"/>
<dbReference type="KEGG" id="bms:BR1156"/>
<dbReference type="KEGG" id="bsi:BS1330_I1152"/>
<dbReference type="PATRIC" id="fig|204722.21.peg.1960"/>
<dbReference type="HOGENOM" id="CLU_025778_1_0_5"/>
<dbReference type="PhylomeDB" id="Q8G0E1"/>
<dbReference type="Proteomes" id="UP000007104">
    <property type="component" value="Chromosome I"/>
</dbReference>
<dbReference type="GO" id="GO:0005886">
    <property type="term" value="C:plasma membrane"/>
    <property type="evidence" value="ECO:0007669"/>
    <property type="project" value="UniProtKB-SubCell"/>
</dbReference>
<dbReference type="GO" id="GO:0046872">
    <property type="term" value="F:metal ion binding"/>
    <property type="evidence" value="ECO:0007669"/>
    <property type="project" value="UniProtKB-KW"/>
</dbReference>
<dbReference type="GO" id="GO:0004222">
    <property type="term" value="F:metalloendopeptidase activity"/>
    <property type="evidence" value="ECO:0007669"/>
    <property type="project" value="InterPro"/>
</dbReference>
<dbReference type="GO" id="GO:0006508">
    <property type="term" value="P:proteolysis"/>
    <property type="evidence" value="ECO:0007669"/>
    <property type="project" value="UniProtKB-KW"/>
</dbReference>
<dbReference type="CDD" id="cd23081">
    <property type="entry name" value="cpPDZ_EcRseP-like"/>
    <property type="match status" value="1"/>
</dbReference>
<dbReference type="CDD" id="cd06163">
    <property type="entry name" value="S2P-M50_PDZ_RseP-like"/>
    <property type="match status" value="1"/>
</dbReference>
<dbReference type="Gene3D" id="2.30.42.10">
    <property type="match status" value="1"/>
</dbReference>
<dbReference type="InterPro" id="IPR001478">
    <property type="entry name" value="PDZ"/>
</dbReference>
<dbReference type="InterPro" id="IPR041489">
    <property type="entry name" value="PDZ_6"/>
</dbReference>
<dbReference type="InterPro" id="IPR036034">
    <property type="entry name" value="PDZ_sf"/>
</dbReference>
<dbReference type="InterPro" id="IPR004387">
    <property type="entry name" value="Pept_M50_Zn"/>
</dbReference>
<dbReference type="InterPro" id="IPR008915">
    <property type="entry name" value="Peptidase_M50"/>
</dbReference>
<dbReference type="NCBIfam" id="TIGR00054">
    <property type="entry name" value="RIP metalloprotease RseP"/>
    <property type="match status" value="1"/>
</dbReference>
<dbReference type="PANTHER" id="PTHR42837:SF2">
    <property type="entry name" value="MEMBRANE METALLOPROTEASE ARASP2, CHLOROPLASTIC-RELATED"/>
    <property type="match status" value="1"/>
</dbReference>
<dbReference type="PANTHER" id="PTHR42837">
    <property type="entry name" value="REGULATOR OF SIGMA-E PROTEASE RSEP"/>
    <property type="match status" value="1"/>
</dbReference>
<dbReference type="Pfam" id="PF17820">
    <property type="entry name" value="PDZ_6"/>
    <property type="match status" value="1"/>
</dbReference>
<dbReference type="Pfam" id="PF02163">
    <property type="entry name" value="Peptidase_M50"/>
    <property type="match status" value="1"/>
</dbReference>
<dbReference type="SMART" id="SM00228">
    <property type="entry name" value="PDZ"/>
    <property type="match status" value="1"/>
</dbReference>
<dbReference type="SUPFAM" id="SSF50156">
    <property type="entry name" value="PDZ domain-like"/>
    <property type="match status" value="1"/>
</dbReference>
<dbReference type="PROSITE" id="PS50106">
    <property type="entry name" value="PDZ"/>
    <property type="match status" value="1"/>
</dbReference>
<dbReference type="PROSITE" id="PS00142">
    <property type="entry name" value="ZINC_PROTEASE"/>
    <property type="match status" value="1"/>
</dbReference>
<proteinExistence type="inferred from homology"/>
<name>Y1156_BRUSU</name>
<comment type="cofactor">
    <cofactor evidence="5">
        <name>Zn(2+)</name>
        <dbReference type="ChEBI" id="CHEBI:29105"/>
    </cofactor>
</comment>
<comment type="subcellular location">
    <subcellularLocation>
        <location evidence="1">Cell inner membrane</location>
        <topology evidence="1">Multi-pass membrane protein</topology>
    </subcellularLocation>
</comment>
<comment type="similarity">
    <text evidence="5">Belongs to the peptidase M50B family.</text>
</comment>
<protein>
    <recommendedName>
        <fullName>Putative zinc metalloprotease BR1156/BS1330_I1152</fullName>
        <ecNumber>3.4.24.-</ecNumber>
    </recommendedName>
</protein>
<accession>Q8G0E1</accession>
<accession>G0KA78</accession>
<feature type="chain" id="PRO_0000088433" description="Putative zinc metalloprotease BR1156/BS1330_I1152">
    <location>
        <begin position="1"/>
        <end position="379"/>
    </location>
</feature>
<feature type="transmembrane region" description="Helical" evidence="2">
    <location>
        <begin position="39"/>
        <end position="61"/>
    </location>
</feature>
<feature type="transmembrane region" description="Helical" evidence="2">
    <location>
        <begin position="122"/>
        <end position="144"/>
    </location>
</feature>
<feature type="transmembrane region" description="Helical" evidence="2">
    <location>
        <begin position="305"/>
        <end position="327"/>
    </location>
</feature>
<feature type="transmembrane region" description="Helical" evidence="2">
    <location>
        <begin position="355"/>
        <end position="377"/>
    </location>
</feature>
<feature type="domain" description="PDZ" evidence="3">
    <location>
        <begin position="133"/>
        <end position="208"/>
    </location>
</feature>
<feature type="active site" evidence="4">
    <location>
        <position position="34"/>
    </location>
</feature>
<feature type="binding site" evidence="4">
    <location>
        <position position="33"/>
    </location>
    <ligand>
        <name>Zn(2+)</name>
        <dbReference type="ChEBI" id="CHEBI:29105"/>
        <note>catalytic</note>
    </ligand>
</feature>
<feature type="binding site" evidence="4">
    <location>
        <position position="37"/>
    </location>
    <ligand>
        <name>Zn(2+)</name>
        <dbReference type="ChEBI" id="CHEBI:29105"/>
        <note>catalytic</note>
    </ligand>
</feature>
<gene>
    <name type="ordered locus">BR1156</name>
    <name type="ordered locus">BS1330_I1152</name>
</gene>
<keyword id="KW-0997">Cell inner membrane</keyword>
<keyword id="KW-1003">Cell membrane</keyword>
<keyword id="KW-0378">Hydrolase</keyword>
<keyword id="KW-0472">Membrane</keyword>
<keyword id="KW-0479">Metal-binding</keyword>
<keyword id="KW-0482">Metalloprotease</keyword>
<keyword id="KW-0645">Protease</keyword>
<keyword id="KW-0812">Transmembrane</keyword>
<keyword id="KW-1133">Transmembrane helix</keyword>
<keyword id="KW-0862">Zinc</keyword>